<keyword id="KW-0472">Membrane</keyword>
<keyword id="KW-1185">Reference proteome</keyword>
<keyword id="KW-0812">Transmembrane</keyword>
<keyword id="KW-1133">Transmembrane helix</keyword>
<organism>
    <name type="scientific">Aspergillus oryzae (strain ATCC 42149 / RIB 40)</name>
    <name type="common">Yellow koji mold</name>
    <dbReference type="NCBI Taxonomy" id="510516"/>
    <lineage>
        <taxon>Eukaryota</taxon>
        <taxon>Fungi</taxon>
        <taxon>Dikarya</taxon>
        <taxon>Ascomycota</taxon>
        <taxon>Pezizomycotina</taxon>
        <taxon>Eurotiomycetes</taxon>
        <taxon>Eurotiomycetidae</taxon>
        <taxon>Eurotiales</taxon>
        <taxon>Aspergillaceae</taxon>
        <taxon>Aspergillus</taxon>
        <taxon>Aspergillus subgen. Circumdati</taxon>
    </lineage>
</organism>
<feature type="chain" id="PRO_0000450488" description="MFS-type transporter oryN">
    <location>
        <begin position="1"/>
        <end position="505"/>
    </location>
</feature>
<feature type="transmembrane region" description="Helical" evidence="1">
    <location>
        <begin position="69"/>
        <end position="89"/>
    </location>
</feature>
<feature type="transmembrane region" description="Helical" evidence="1">
    <location>
        <begin position="106"/>
        <end position="126"/>
    </location>
</feature>
<feature type="transmembrane region" description="Helical" evidence="1">
    <location>
        <begin position="135"/>
        <end position="155"/>
    </location>
</feature>
<feature type="transmembrane region" description="Helical" evidence="1">
    <location>
        <begin position="166"/>
        <end position="186"/>
    </location>
</feature>
<feature type="transmembrane region" description="Helical" evidence="1">
    <location>
        <begin position="193"/>
        <end position="213"/>
    </location>
</feature>
<feature type="transmembrane region" description="Helical" evidence="1">
    <location>
        <begin position="226"/>
        <end position="246"/>
    </location>
</feature>
<feature type="transmembrane region" description="Helical" evidence="1">
    <location>
        <begin position="280"/>
        <end position="300"/>
    </location>
</feature>
<feature type="transmembrane region" description="Helical" evidence="1">
    <location>
        <begin position="301"/>
        <end position="321"/>
    </location>
</feature>
<feature type="transmembrane region" description="Helical" evidence="1">
    <location>
        <begin position="337"/>
        <end position="357"/>
    </location>
</feature>
<feature type="transmembrane region" description="Helical" evidence="1">
    <location>
        <begin position="376"/>
        <end position="396"/>
    </location>
</feature>
<feature type="transmembrane region" description="Helical" evidence="1">
    <location>
        <begin position="401"/>
        <end position="421"/>
    </location>
</feature>
<feature type="transmembrane region" description="Helical" evidence="1">
    <location>
        <begin position="440"/>
        <end position="460"/>
    </location>
</feature>
<feature type="transmembrane region" description="Helical" evidence="1">
    <location>
        <begin position="468"/>
        <end position="488"/>
    </location>
</feature>
<feature type="region of interest" description="Disordered" evidence="2">
    <location>
        <begin position="1"/>
        <end position="54"/>
    </location>
</feature>
<accession>Q2TXG1</accession>
<evidence type="ECO:0000255" key="1"/>
<evidence type="ECO:0000256" key="2">
    <source>
        <dbReference type="SAM" id="MobiDB-lite"/>
    </source>
</evidence>
<evidence type="ECO:0000269" key="3">
    <source>
    </source>
</evidence>
<evidence type="ECO:0000303" key="4">
    <source>
    </source>
</evidence>
<proteinExistence type="inferred from homology"/>
<reference key="1">
    <citation type="journal article" date="2005" name="Nature">
        <title>Genome sequencing and analysis of Aspergillus oryzae.</title>
        <authorList>
            <person name="Machida M."/>
            <person name="Asai K."/>
            <person name="Sano M."/>
            <person name="Tanaka T."/>
            <person name="Kumagai T."/>
            <person name="Terai G."/>
            <person name="Kusumoto K."/>
            <person name="Arima T."/>
            <person name="Akita O."/>
            <person name="Kashiwagi Y."/>
            <person name="Abe K."/>
            <person name="Gomi K."/>
            <person name="Horiuchi H."/>
            <person name="Kitamoto K."/>
            <person name="Kobayashi T."/>
            <person name="Takeuchi M."/>
            <person name="Denning D.W."/>
            <person name="Galagan J.E."/>
            <person name="Nierman W.C."/>
            <person name="Yu J."/>
            <person name="Archer D.B."/>
            <person name="Bennett J.W."/>
            <person name="Bhatnagar D."/>
            <person name="Cleveland T.E."/>
            <person name="Fedorova N.D."/>
            <person name="Gotoh O."/>
            <person name="Horikawa H."/>
            <person name="Hosoyama A."/>
            <person name="Ichinomiya M."/>
            <person name="Igarashi R."/>
            <person name="Iwashita K."/>
            <person name="Juvvadi P.R."/>
            <person name="Kato M."/>
            <person name="Kato Y."/>
            <person name="Kin T."/>
            <person name="Kokubun A."/>
            <person name="Maeda H."/>
            <person name="Maeyama N."/>
            <person name="Maruyama J."/>
            <person name="Nagasaki H."/>
            <person name="Nakajima T."/>
            <person name="Oda K."/>
            <person name="Okada K."/>
            <person name="Paulsen I."/>
            <person name="Sakamoto K."/>
            <person name="Sawano T."/>
            <person name="Takahashi M."/>
            <person name="Takase K."/>
            <person name="Terabayashi Y."/>
            <person name="Wortman J.R."/>
            <person name="Yamada O."/>
            <person name="Yamagata Y."/>
            <person name="Anazawa H."/>
            <person name="Hata Y."/>
            <person name="Koide Y."/>
            <person name="Komori T."/>
            <person name="Koyama Y."/>
            <person name="Minetoki T."/>
            <person name="Suharnan S."/>
            <person name="Tanaka A."/>
            <person name="Isono K."/>
            <person name="Kuhara S."/>
            <person name="Ogasawara N."/>
            <person name="Kikuchi H."/>
        </authorList>
    </citation>
    <scope>NUCLEOTIDE SEQUENCE [LARGE SCALE GENOMIC DNA]</scope>
    <source>
        <strain>ATCC 42149 / RIB 40</strain>
    </source>
</reference>
<reference key="2">
    <citation type="journal article" date="2018" name="J. Fungi">
        <title>Oryzines A &amp; B, maleidride congeners from Aspergillus oryzae and their putative biosynthesis.</title>
        <authorList>
            <person name="Wasil Z."/>
            <person name="Kuhnert E."/>
            <person name="Simpson T.J."/>
            <person name="Cox R.J."/>
        </authorList>
    </citation>
    <scope>FUNCTION</scope>
</reference>
<gene>
    <name evidence="4" type="primary">oryN</name>
    <name type="ORF">AO090010000160</name>
</gene>
<sequence>MAVAELPNIVSTDSSPSPHPGSRLSSEPTDIESQKAPSNAEPKTDPNLVTWDGPDDPANPQNWSFAYRAFVTAIWVYGNLCTCIASSIFSSGSGQIAQRFHVGSTVVTLGISLFLLGYTVGPPVWGPLSERFGRKWPMVIGMALFTIFCIPVAVAKNLQTVLIGRFLTGVFGAAPLSLVGGSLVDMWNPAQRGVAMACCIGTIFGSPVLAPLMGNFIVESYLGWRFTQWLSCIMGGSCTVLVVFGLPETFAGSILRKKAAAIRKAGNPDVHTVYDGKQKGIKDIFVIFLLRPFALLVTEPILLLVTIYQAFIYGILYLVFVSYPIAFREVRGWSLGISALPYIGMMVGILIGCAIVVIQTRRNYDGNKAVVPEQRLPLMIAGGCLLPVGLFIFAWTSNPNIHWAGMVIGSAPVGTGMYMVFVQCLNYLVDVYPTIANSAIGANTFVRSFFGAGFPLFGPFMYHNLGVAWASSTLGFISIAMIPIPVLFYRYGARIRSWSKNSKHT</sequence>
<protein>
    <recommendedName>
        <fullName evidence="4">MFS-type transporter oryN</fullName>
    </recommendedName>
    <alternativeName>
        <fullName evidence="4">Oryzines biosynthesis cluster protein N</fullName>
    </alternativeName>
</protein>
<dbReference type="EMBL" id="BA000056">
    <property type="protein sequence ID" value="BAE66062.1"/>
    <property type="molecule type" value="Genomic_DNA"/>
</dbReference>
<dbReference type="RefSeq" id="XP_001827195.1">
    <property type="nucleotide sequence ID" value="XM_001827143.2"/>
</dbReference>
<dbReference type="SMR" id="Q2TXG1"/>
<dbReference type="EnsemblFungi" id="BAE66062">
    <property type="protein sequence ID" value="BAE66062"/>
    <property type="gene ID" value="AO090010000160"/>
</dbReference>
<dbReference type="GeneID" id="5999329"/>
<dbReference type="KEGG" id="aor:AO090010000160"/>
<dbReference type="VEuPathDB" id="FungiDB:AO090010000160"/>
<dbReference type="HOGENOM" id="CLU_008455_11_4_1"/>
<dbReference type="OMA" id="NFITASH"/>
<dbReference type="OrthoDB" id="15027at5052"/>
<dbReference type="Proteomes" id="UP000006564">
    <property type="component" value="Chromosome 8"/>
</dbReference>
<dbReference type="GO" id="GO:0005886">
    <property type="term" value="C:plasma membrane"/>
    <property type="evidence" value="ECO:0007669"/>
    <property type="project" value="TreeGrafter"/>
</dbReference>
<dbReference type="GO" id="GO:0022857">
    <property type="term" value="F:transmembrane transporter activity"/>
    <property type="evidence" value="ECO:0007669"/>
    <property type="project" value="InterPro"/>
</dbReference>
<dbReference type="CDD" id="cd17323">
    <property type="entry name" value="MFS_Tpo1_MDR_like"/>
    <property type="match status" value="1"/>
</dbReference>
<dbReference type="FunFam" id="1.20.1250.20:FF:000011">
    <property type="entry name" value="MFS multidrug transporter, putative"/>
    <property type="match status" value="1"/>
</dbReference>
<dbReference type="Gene3D" id="1.20.1250.20">
    <property type="entry name" value="MFS general substrate transporter like domains"/>
    <property type="match status" value="1"/>
</dbReference>
<dbReference type="InterPro" id="IPR011701">
    <property type="entry name" value="MFS"/>
</dbReference>
<dbReference type="InterPro" id="IPR020846">
    <property type="entry name" value="MFS_dom"/>
</dbReference>
<dbReference type="InterPro" id="IPR036259">
    <property type="entry name" value="MFS_trans_sf"/>
</dbReference>
<dbReference type="PANTHER" id="PTHR23502">
    <property type="entry name" value="MAJOR FACILITATOR SUPERFAMILY"/>
    <property type="match status" value="1"/>
</dbReference>
<dbReference type="PANTHER" id="PTHR23502:SF156">
    <property type="entry name" value="TRANSPORTER, PUTATIVE (AFU_ORTHOLOGUE AFUA_5G00420)-RELATED"/>
    <property type="match status" value="1"/>
</dbReference>
<dbReference type="Pfam" id="PF07690">
    <property type="entry name" value="MFS_1"/>
    <property type="match status" value="1"/>
</dbReference>
<dbReference type="SUPFAM" id="SSF103473">
    <property type="entry name" value="MFS general substrate transporter"/>
    <property type="match status" value="1"/>
</dbReference>
<dbReference type="PROSITE" id="PS50850">
    <property type="entry name" value="MFS"/>
    <property type="match status" value="1"/>
</dbReference>
<name>ORYN_ASPOR</name>
<comment type="function">
    <text evidence="3">MFS-type transporter; part of the gene cluster that mediates the biosynthesis of oryzines, natural products with an unusual maleidride backbone.</text>
</comment>
<comment type="subcellular location">
    <subcellularLocation>
        <location evidence="1">Membrane</location>
        <topology evidence="1">Multi-pass membrane protein</topology>
    </subcellularLocation>
</comment>
<comment type="similarity">
    <text evidence="1">Belongs to the major facilitator superfamily. CAR1 family.</text>
</comment>